<sequence>MRHQLRVPKLGRPADQRKAILRGLTTQLIREGRVTTTKAKAKALRNEAERMITLAKEGTLAARRRAIGYIYDKKLVHQLFEKAQDRYGDREGGYTRIVRTVPRRGDNAEMAIIELV</sequence>
<accession>A9BCM3</accession>
<name>RL17_PROM4</name>
<feature type="chain" id="PRO_1000144466" description="Large ribosomal subunit protein bL17">
    <location>
        <begin position="1"/>
        <end position="116"/>
    </location>
</feature>
<dbReference type="EMBL" id="CP000878">
    <property type="protein sequence ID" value="ABX09585.1"/>
    <property type="molecule type" value="Genomic_DNA"/>
</dbReference>
<dbReference type="RefSeq" id="WP_012196206.1">
    <property type="nucleotide sequence ID" value="NC_009976.1"/>
</dbReference>
<dbReference type="SMR" id="A9BCM3"/>
<dbReference type="STRING" id="93059.P9211_16541"/>
<dbReference type="KEGG" id="pmj:P9211_16541"/>
<dbReference type="eggNOG" id="COG0203">
    <property type="taxonomic scope" value="Bacteria"/>
</dbReference>
<dbReference type="HOGENOM" id="CLU_074407_2_2_3"/>
<dbReference type="OrthoDB" id="9809073at2"/>
<dbReference type="Proteomes" id="UP000000788">
    <property type="component" value="Chromosome"/>
</dbReference>
<dbReference type="GO" id="GO:0022625">
    <property type="term" value="C:cytosolic large ribosomal subunit"/>
    <property type="evidence" value="ECO:0007669"/>
    <property type="project" value="TreeGrafter"/>
</dbReference>
<dbReference type="GO" id="GO:0003735">
    <property type="term" value="F:structural constituent of ribosome"/>
    <property type="evidence" value="ECO:0007669"/>
    <property type="project" value="InterPro"/>
</dbReference>
<dbReference type="GO" id="GO:0006412">
    <property type="term" value="P:translation"/>
    <property type="evidence" value="ECO:0007669"/>
    <property type="project" value="UniProtKB-UniRule"/>
</dbReference>
<dbReference type="FunFam" id="3.90.1030.10:FF:000001">
    <property type="entry name" value="50S ribosomal protein L17"/>
    <property type="match status" value="1"/>
</dbReference>
<dbReference type="Gene3D" id="3.90.1030.10">
    <property type="entry name" value="Ribosomal protein L17"/>
    <property type="match status" value="1"/>
</dbReference>
<dbReference type="HAMAP" id="MF_01368">
    <property type="entry name" value="Ribosomal_bL17"/>
    <property type="match status" value="1"/>
</dbReference>
<dbReference type="InterPro" id="IPR000456">
    <property type="entry name" value="Ribosomal_bL17"/>
</dbReference>
<dbReference type="InterPro" id="IPR036373">
    <property type="entry name" value="Ribosomal_bL17_sf"/>
</dbReference>
<dbReference type="NCBIfam" id="TIGR00059">
    <property type="entry name" value="L17"/>
    <property type="match status" value="1"/>
</dbReference>
<dbReference type="PANTHER" id="PTHR14413:SF16">
    <property type="entry name" value="LARGE RIBOSOMAL SUBUNIT PROTEIN BL17M"/>
    <property type="match status" value="1"/>
</dbReference>
<dbReference type="PANTHER" id="PTHR14413">
    <property type="entry name" value="RIBOSOMAL PROTEIN L17"/>
    <property type="match status" value="1"/>
</dbReference>
<dbReference type="Pfam" id="PF01196">
    <property type="entry name" value="Ribosomal_L17"/>
    <property type="match status" value="1"/>
</dbReference>
<dbReference type="SUPFAM" id="SSF64263">
    <property type="entry name" value="Prokaryotic ribosomal protein L17"/>
    <property type="match status" value="1"/>
</dbReference>
<gene>
    <name evidence="1" type="primary">rplQ</name>
    <name evidence="1" type="synonym">rpl17</name>
    <name type="ordered locus">P9211_16541</name>
</gene>
<organism>
    <name type="scientific">Prochlorococcus marinus (strain MIT 9211)</name>
    <dbReference type="NCBI Taxonomy" id="93059"/>
    <lineage>
        <taxon>Bacteria</taxon>
        <taxon>Bacillati</taxon>
        <taxon>Cyanobacteriota</taxon>
        <taxon>Cyanophyceae</taxon>
        <taxon>Synechococcales</taxon>
        <taxon>Prochlorococcaceae</taxon>
        <taxon>Prochlorococcus</taxon>
    </lineage>
</organism>
<proteinExistence type="inferred from homology"/>
<reference key="1">
    <citation type="journal article" date="2007" name="PLoS Genet.">
        <title>Patterns and implications of gene gain and loss in the evolution of Prochlorococcus.</title>
        <authorList>
            <person name="Kettler G.C."/>
            <person name="Martiny A.C."/>
            <person name="Huang K."/>
            <person name="Zucker J."/>
            <person name="Coleman M.L."/>
            <person name="Rodrigue S."/>
            <person name="Chen F."/>
            <person name="Lapidus A."/>
            <person name="Ferriera S."/>
            <person name="Johnson J."/>
            <person name="Steglich C."/>
            <person name="Church G.M."/>
            <person name="Richardson P."/>
            <person name="Chisholm S.W."/>
        </authorList>
    </citation>
    <scope>NUCLEOTIDE SEQUENCE [LARGE SCALE GENOMIC DNA]</scope>
    <source>
        <strain>MIT 9211</strain>
    </source>
</reference>
<keyword id="KW-1185">Reference proteome</keyword>
<keyword id="KW-0687">Ribonucleoprotein</keyword>
<keyword id="KW-0689">Ribosomal protein</keyword>
<protein>
    <recommendedName>
        <fullName evidence="1">Large ribosomal subunit protein bL17</fullName>
    </recommendedName>
    <alternativeName>
        <fullName evidence="2">50S ribosomal protein L17</fullName>
    </alternativeName>
</protein>
<evidence type="ECO:0000255" key="1">
    <source>
        <dbReference type="HAMAP-Rule" id="MF_01368"/>
    </source>
</evidence>
<evidence type="ECO:0000305" key="2"/>
<comment type="subunit">
    <text evidence="1">Part of the 50S ribosomal subunit. Contacts protein L32.</text>
</comment>
<comment type="similarity">
    <text evidence="1">Belongs to the bacterial ribosomal protein bL17 family.</text>
</comment>